<comment type="function">
    <text evidence="7 8 9 12">Testis-specific serine/threonine-protein kinase required during spermatid development. Phosphorylates 'Ser-281' of TSKS and SPAG16. Involved in the late stages of spermatogenesis, during the reconstruction of the cytoplasm. During spermatogenesis, required for the transformation of a ring-shaped structure around the base of the flagellum originating from the chromatoid body.</text>
</comment>
<comment type="catalytic activity">
    <reaction evidence="11">
        <text>L-seryl-[protein] + ATP = O-phospho-L-seryl-[protein] + ADP + H(+)</text>
        <dbReference type="Rhea" id="RHEA:17989"/>
        <dbReference type="Rhea" id="RHEA-COMP:9863"/>
        <dbReference type="Rhea" id="RHEA-COMP:11604"/>
        <dbReference type="ChEBI" id="CHEBI:15378"/>
        <dbReference type="ChEBI" id="CHEBI:29999"/>
        <dbReference type="ChEBI" id="CHEBI:30616"/>
        <dbReference type="ChEBI" id="CHEBI:83421"/>
        <dbReference type="ChEBI" id="CHEBI:456216"/>
        <dbReference type="EC" id="2.7.11.1"/>
    </reaction>
</comment>
<comment type="catalytic activity">
    <reaction evidence="11">
        <text>L-threonyl-[protein] + ATP = O-phospho-L-threonyl-[protein] + ADP + H(+)</text>
        <dbReference type="Rhea" id="RHEA:46608"/>
        <dbReference type="Rhea" id="RHEA-COMP:11060"/>
        <dbReference type="Rhea" id="RHEA-COMP:11605"/>
        <dbReference type="ChEBI" id="CHEBI:15378"/>
        <dbReference type="ChEBI" id="CHEBI:30013"/>
        <dbReference type="ChEBI" id="CHEBI:30616"/>
        <dbReference type="ChEBI" id="CHEBI:61977"/>
        <dbReference type="ChEBI" id="CHEBI:456216"/>
        <dbReference type="EC" id="2.7.11.1"/>
    </reaction>
</comment>
<comment type="cofactor">
    <cofactor evidence="11">
        <name>Mg(2+)</name>
        <dbReference type="ChEBI" id="CHEBI:18420"/>
    </cofactor>
    <text evidence="15">Mg(2+) and Mn(2+) were both present in the kinase buffer but Mg(2+) is likely to be the in vivo cofactor.</text>
</comment>
<comment type="activity regulation">
    <text evidence="1">Activated by phosphorylation on Thr-174, potentially by autophosphorylation.</text>
</comment>
<comment type="subunit">
    <text evidence="6 7 11">Interacts with TSSK1B (PubMed:10781952, PubMed:18367677). Interacts with HSP90; this interaction stabilizes TSSK2 (PubMed:23599433).</text>
</comment>
<comment type="subcellular location">
    <subcellularLocation>
        <location>Cytoplasm</location>
    </subcellularLocation>
    <subcellularLocation>
        <location>Cytoplasm</location>
        <location>Cytoskeleton</location>
        <location>Microtubule organizing center</location>
        <location>Centrosome</location>
        <location>Centriole</location>
    </subcellularLocation>
    <subcellularLocation>
        <location>Cytoplasmic vesicle</location>
        <location>Secretory vesicle</location>
        <location>Acrosome</location>
    </subcellularLocation>
    <text>Present in the cytoplasm of elongating spermatids. In spermatozoa, localizes in the equatorial segment, neck, the midpiece and in a specific sperm head compartment. In spermatids, concentrates in centrioles during flagellogenesis. Localizes in the tail and acrosomal regions of epididymal sperm.</text>
</comment>
<comment type="tissue specificity">
    <text evidence="8 10 12 13">Testis-specific. Expressed only in the spermatids postmeiotically at the final stages of cytodifferentiation in the seminiferous tubules (at protein level). Not detected in released sperms in the lumen of the seminiferous tubules. Also present in the epididymal sperm (at protein level).</text>
</comment>
<comment type="developmental stage">
    <text>First expression detected at 3.5 to 4 weeks.</text>
</comment>
<comment type="PTM">
    <text evidence="2">Autophosphorylated.</text>
</comment>
<comment type="PTM">
    <text evidence="11">Ubiquitinated; HSP90 activity negatively regulates ubiquitination and degradation.</text>
</comment>
<comment type="disruption phenotype">
    <text evidence="8 9">Male mice lacking Tssk1b and Tssk2 are sterile due to haploinsufficiency. chimeras show failure to form elongated spermatids, apoptosis of spermatocytes and spermatids, and the appearance of numerous round cells in the epididymal lumen. Elongating spermatids possess a collapsed mitochondrial sheath.</text>
</comment>
<comment type="similarity">
    <text evidence="14">Belongs to the protein kinase superfamily. CAMK Ser/Thr protein kinase family.</text>
</comment>
<reference key="1">
    <citation type="journal article" date="1997" name="J. Cell Biol.">
        <title>A novel family of serine/threonine kinases participating in spermiogenesis.</title>
        <authorList>
            <person name="Kueng P."/>
            <person name="Nikolova Z."/>
            <person name="Djonov V."/>
            <person name="Hemphill A."/>
            <person name="Rohrbach V."/>
            <person name="Boehlen D."/>
            <person name="Zuercher G."/>
            <person name="Andres A.-C."/>
            <person name="Ziemiecki A."/>
        </authorList>
    </citation>
    <scope>NUCLEOTIDE SEQUENCE [MRNA]</scope>
    <scope>FUNCTION</scope>
    <scope>SUBCELLULAR LOCATION</scope>
    <scope>TISSUE SPECIFICITY</scope>
    <source>
        <tissue>Testis</tissue>
    </source>
</reference>
<reference key="2">
    <citation type="submission" date="2005-07" db="EMBL/GenBank/DDBJ databases">
        <authorList>
            <person name="Mural R.J."/>
            <person name="Adams M.D."/>
            <person name="Myers E.W."/>
            <person name="Smith H.O."/>
            <person name="Venter J.C."/>
        </authorList>
    </citation>
    <scope>NUCLEOTIDE SEQUENCE [LARGE SCALE GENOMIC DNA]</scope>
</reference>
<reference key="3">
    <citation type="journal article" date="2004" name="Genome Res.">
        <title>The status, quality, and expansion of the NIH full-length cDNA project: the Mammalian Gene Collection (MGC).</title>
        <authorList>
            <consortium name="The MGC Project Team"/>
        </authorList>
    </citation>
    <scope>NUCLEOTIDE SEQUENCE [LARGE SCALE MRNA]</scope>
    <source>
        <tissue>Testis</tissue>
    </source>
</reference>
<reference key="4">
    <citation type="journal article" date="1998" name="Mech. Dev.">
        <title>Immunohistochemical analysis of the expression of two serine-threonine kinases in the maturing mouse testis.</title>
        <authorList>
            <person name="Nayak S."/>
            <person name="Galili N."/>
            <person name="Buck C.A."/>
        </authorList>
    </citation>
    <scope>SUBCELLULAR LOCATION</scope>
    <scope>TISSUE SPECIFICITY</scope>
</reference>
<reference key="5">
    <citation type="journal article" date="2000" name="Mech. Dev.">
        <title>A novel member of the testis specific serine kinase family, tssk-3, expressed in the Leydig cells of sexually mature mice.</title>
        <authorList>
            <person name="Zuercher G."/>
            <person name="Rohrbach V."/>
            <person name="Andres A.-C."/>
            <person name="Ziemiecki A."/>
        </authorList>
    </citation>
    <scope>INTERACTION WITH TSSK1B</scope>
</reference>
<reference key="6">
    <citation type="journal article" date="2008" name="Biol. Reprod.">
        <title>Phosphorylation of mouse sperm axoneme central apparatus protein SPAG16L by a testis-specific kinase, TSSK2.</title>
        <authorList>
            <person name="Zhang Z."/>
            <person name="Shen X."/>
            <person name="Jones B.H."/>
            <person name="Xu B."/>
            <person name="Herr J.C."/>
            <person name="Strauss J.F. III"/>
        </authorList>
    </citation>
    <scope>FUNCTION</scope>
    <scope>SUBCELLULAR LOCATION</scope>
    <scope>INTERACTION WITH SPAG16</scope>
</reference>
<reference key="7">
    <citation type="journal article" date="2008" name="Dev. Biol.">
        <title>TSKS concentrates in spermatid centrioles during flagellogenesis.</title>
        <authorList>
            <person name="Xu B."/>
            <person name="Hao Z."/>
            <person name="Jha K.N."/>
            <person name="Zhang Z."/>
            <person name="Urekar C."/>
            <person name="Digilio L."/>
            <person name="Pulido S."/>
            <person name="Strauss J.F. III"/>
            <person name="Flickinger C.J."/>
            <person name="Herr J.C."/>
        </authorList>
    </citation>
    <scope>SUBCELLULAR LOCATION</scope>
</reference>
<reference key="8">
    <citation type="journal article" date="2008" name="Dev. Biol.">
        <title>Targeted deletion of Tssk1 and 2 causes male infertility due to haploinsufficiency.</title>
        <authorList>
            <person name="Xu B."/>
            <person name="Hao Z."/>
            <person name="Jha K.N."/>
            <person name="Zhang Z."/>
            <person name="Urekar C."/>
            <person name="Digilio L."/>
            <person name="Pulido S."/>
            <person name="Strauss J.F. III"/>
            <person name="Flickinger C.J."/>
            <person name="Herr J.C."/>
        </authorList>
    </citation>
    <scope>FUNCTION</scope>
    <scope>TISSUE SPECIFICITY</scope>
    <scope>DISRUPTION PHENOTYPE</scope>
</reference>
<reference key="9">
    <citation type="journal article" date="2010" name="J. Cell Sci.">
        <title>Functional transformation of the chromatoid body in mouse spermatids requires testis-specific serine/threonine kinases.</title>
        <authorList>
            <person name="Shang P."/>
            <person name="Baarends W.M."/>
            <person name="Hoogerbrugge J."/>
            <person name="Ooms M.P."/>
            <person name="van Cappellen W.A."/>
            <person name="de Jong A.A."/>
            <person name="Dohle G.R."/>
            <person name="van Eenennaam H."/>
            <person name="Gossen J.A."/>
            <person name="Grootegoed J.A."/>
        </authorList>
    </citation>
    <scope>DISRUPTION PHENOTYPE</scope>
    <scope>SUBCELLULAR LOCATION</scope>
    <scope>FUNCTION</scope>
</reference>
<reference key="10">
    <citation type="journal article" date="2011" name="Mol. Hum. Reprod.">
        <title>Expression and localization of five members of the testis-specific serine kinase (Tssk) family in mouse and human sperm and testis.</title>
        <authorList>
            <person name="Li Y."/>
            <person name="Sosnik J."/>
            <person name="Brassard L."/>
            <person name="Reese M."/>
            <person name="Spiridonov N.A."/>
            <person name="Bates T.C."/>
            <person name="Johnson G.R."/>
            <person name="Anguita J."/>
            <person name="Visconti P.E."/>
            <person name="Salicioni A.M."/>
        </authorList>
    </citation>
    <scope>SUBCELLULAR LOCATION</scope>
    <scope>TISSUE SPECIFICITY</scope>
</reference>
<reference evidence="14" key="11">
    <citation type="journal article" date="2013" name="J. Biol. Chem.">
        <title>Heat shock protein 90 functions to stabilize and activate the testis-specific serine/threonine kinases, a family of kinases essential for male fertility.</title>
        <authorList>
            <person name="Jha K.N."/>
            <person name="Coleman A.R."/>
            <person name="Wong L."/>
            <person name="Salicioni A.M."/>
            <person name="Howcroft E."/>
            <person name="Johnson G.R."/>
        </authorList>
    </citation>
    <scope>CATALYTIC ACTIVITY</scope>
    <scope>COFACTOR</scope>
    <scope>INTERACTION WITH HSP90</scope>
    <scope>UBIQUITINATION</scope>
</reference>
<protein>
    <recommendedName>
        <fullName>Testis-specific serine/threonine-protein kinase 2</fullName>
        <shortName>TSK-2</shortName>
        <shortName>TSK2</shortName>
        <shortName>TSSK-2</shortName>
        <shortName>Testis-specific kinase 2</shortName>
        <ecNumber evidence="11">2.7.11.1</ecNumber>
    </recommendedName>
    <alternativeName>
        <fullName>Serine/threonine-protein kinase 22B</fullName>
    </alternativeName>
</protein>
<keyword id="KW-0067">ATP-binding</keyword>
<keyword id="KW-0963">Cytoplasm</keyword>
<keyword id="KW-0968">Cytoplasmic vesicle</keyword>
<keyword id="KW-0206">Cytoskeleton</keyword>
<keyword id="KW-0217">Developmental protein</keyword>
<keyword id="KW-0221">Differentiation</keyword>
<keyword id="KW-0418">Kinase</keyword>
<keyword id="KW-0460">Magnesium</keyword>
<keyword id="KW-0479">Metal-binding</keyword>
<keyword id="KW-0547">Nucleotide-binding</keyword>
<keyword id="KW-0597">Phosphoprotein</keyword>
<keyword id="KW-1185">Reference proteome</keyword>
<keyword id="KW-0723">Serine/threonine-protein kinase</keyword>
<keyword id="KW-0744">Spermatogenesis</keyword>
<keyword id="KW-0808">Transferase</keyword>
<keyword id="KW-0832">Ubl conjugation</keyword>
<feature type="chain" id="PRO_0000086769" description="Testis-specific serine/threonine-protein kinase 2">
    <location>
        <begin position="1"/>
        <end position="358"/>
    </location>
</feature>
<feature type="domain" description="Protein kinase" evidence="3">
    <location>
        <begin position="12"/>
        <end position="272"/>
    </location>
</feature>
<feature type="region of interest" description="Disordered" evidence="5">
    <location>
        <begin position="296"/>
        <end position="358"/>
    </location>
</feature>
<feature type="compositionally biased region" description="Basic and acidic residues" evidence="5">
    <location>
        <begin position="296"/>
        <end position="315"/>
    </location>
</feature>
<feature type="compositionally biased region" description="Basic and acidic residues" evidence="5">
    <location>
        <begin position="329"/>
        <end position="358"/>
    </location>
</feature>
<feature type="active site" description="Proton acceptor" evidence="3 4">
    <location>
        <position position="136"/>
    </location>
</feature>
<feature type="binding site" evidence="3">
    <location>
        <begin position="18"/>
        <end position="26"/>
    </location>
    <ligand>
        <name>ATP</name>
        <dbReference type="ChEBI" id="CHEBI:30616"/>
    </ligand>
</feature>
<feature type="binding site" evidence="3">
    <location>
        <position position="41"/>
    </location>
    <ligand>
        <name>ATP</name>
        <dbReference type="ChEBI" id="CHEBI:30616"/>
    </ligand>
</feature>
<feature type="sequence conflict" description="In Ref. 1; AAC03367." evidence="14" ref="1">
    <original>E</original>
    <variation>T</variation>
    <location>
        <position position="100"/>
    </location>
</feature>
<feature type="sequence conflict" description="In Ref. 1; AAC03367." evidence="14" ref="1">
    <original>AR</original>
    <variation>GG</variation>
    <location>
        <begin position="113"/>
        <end position="114"/>
    </location>
</feature>
<feature type="sequence conflict" description="In Ref. 1; AAC03367." evidence="14" ref="1">
    <original>L</original>
    <variation>V</variation>
    <location>
        <position position="120"/>
    </location>
</feature>
<feature type="sequence conflict" description="In Ref. 1; AAC03367." evidence="14" ref="1">
    <original>R</original>
    <variation>G</variation>
    <location>
        <position position="160"/>
    </location>
</feature>
<feature type="sequence conflict" description="In Ref. 1; AAC03367." evidence="14" ref="1">
    <original>L</original>
    <variation>R</variation>
    <location>
        <position position="187"/>
    </location>
</feature>
<feature type="sequence conflict" description="In Ref. 1; AAC03367." evidence="14" ref="1">
    <location>
        <position position="224"/>
    </location>
</feature>
<sequence>MDDAAVLRKKGYIVGINLGKGSYAKVKSAYSERLKFNVAVKIIDRKKTPTDFVERFLPREMDILATVNHRSIIKTYEIFETSDGRIYIVMELGVQGDLLEFIKCRGALHEDVARKMFRQLSSAVKYCHDLDVVHRDLKCENLLLDKDFNIKLSDFGFSKRCLRDGSGRIVLSKTFCGSAAYAAPEVLQGIPYQPKVYDIWSLGVILYIMVCGSMPYDDSDIKKMLRIQKEHRVDFPRSKNLTGECKDLIYRILQPDVNRRLHIDEILSHSWLQPPKPKAMSSASFKREGEGKYRADCKLDTRPGSRPEHRPDHKLATKPQQRMLVTPENEDRMEDRLAETSRAKDHHISGAEVEKAST</sequence>
<dbReference type="EC" id="2.7.11.1" evidence="11"/>
<dbReference type="EMBL" id="AF019926">
    <property type="protein sequence ID" value="AAC03367.1"/>
    <property type="molecule type" value="mRNA"/>
</dbReference>
<dbReference type="EMBL" id="BC061175">
    <property type="protein sequence ID" value="AAH61175.1"/>
    <property type="molecule type" value="mRNA"/>
</dbReference>
<dbReference type="EMBL" id="CH466521">
    <property type="protein sequence ID" value="EDK97491.1"/>
    <property type="molecule type" value="Genomic_DNA"/>
</dbReference>
<dbReference type="CCDS" id="CCDS28012.1"/>
<dbReference type="RefSeq" id="NP_033462.2">
    <property type="nucleotide sequence ID" value="NM_009436.2"/>
</dbReference>
<dbReference type="SMR" id="O54863"/>
<dbReference type="FunCoup" id="O54863">
    <property type="interactions" value="227"/>
</dbReference>
<dbReference type="IntAct" id="O54863">
    <property type="interactions" value="1"/>
</dbReference>
<dbReference type="MINT" id="O54863"/>
<dbReference type="STRING" id="10090.ENSMUSP00000051035"/>
<dbReference type="iPTMnet" id="O54863"/>
<dbReference type="PhosphoSitePlus" id="O54863"/>
<dbReference type="PaxDb" id="10090-ENSMUSP00000051035"/>
<dbReference type="ProteomicsDB" id="298001"/>
<dbReference type="Antibodypedia" id="22857">
    <property type="antibodies" value="72 antibodies from 14 providers"/>
</dbReference>
<dbReference type="DNASU" id="22115"/>
<dbReference type="Ensembl" id="ENSMUST00000055374.8">
    <property type="protein sequence ID" value="ENSMUSP00000051035.7"/>
    <property type="gene ID" value="ENSMUSG00000045521.8"/>
</dbReference>
<dbReference type="GeneID" id="22115"/>
<dbReference type="KEGG" id="mmu:22115"/>
<dbReference type="UCSC" id="uc007yml.1">
    <property type="organism name" value="mouse"/>
</dbReference>
<dbReference type="AGR" id="MGI:1347559"/>
<dbReference type="CTD" id="23617"/>
<dbReference type="MGI" id="MGI:1347559">
    <property type="gene designation" value="Tssk2"/>
</dbReference>
<dbReference type="VEuPathDB" id="HostDB:ENSMUSG00000045521"/>
<dbReference type="eggNOG" id="KOG0583">
    <property type="taxonomic scope" value="Eukaryota"/>
</dbReference>
<dbReference type="GeneTree" id="ENSGT00940000162226"/>
<dbReference type="HOGENOM" id="CLU_000288_63_0_1"/>
<dbReference type="InParanoid" id="O54863"/>
<dbReference type="OMA" id="HAECKLD"/>
<dbReference type="OrthoDB" id="541276at2759"/>
<dbReference type="PhylomeDB" id="O54863"/>
<dbReference type="TreeFam" id="TF352374"/>
<dbReference type="BioGRID-ORCS" id="22115">
    <property type="hits" value="0 hits in 77 CRISPR screens"/>
</dbReference>
<dbReference type="CD-CODE" id="01CA17F3">
    <property type="entry name" value="Centrosome"/>
</dbReference>
<dbReference type="ChiTaRS" id="Tssk2">
    <property type="organism name" value="mouse"/>
</dbReference>
<dbReference type="PRO" id="PR:O54863"/>
<dbReference type="Proteomes" id="UP000000589">
    <property type="component" value="Chromosome 16"/>
</dbReference>
<dbReference type="RNAct" id="O54863">
    <property type="molecule type" value="protein"/>
</dbReference>
<dbReference type="Bgee" id="ENSMUSG00000045521">
    <property type="expression patterns" value="Expressed in spermatid and 12 other cell types or tissues"/>
</dbReference>
<dbReference type="GO" id="GO:0001669">
    <property type="term" value="C:acrosomal vesicle"/>
    <property type="evidence" value="ECO:0000314"/>
    <property type="project" value="UniProtKB"/>
</dbReference>
<dbReference type="GO" id="GO:0005814">
    <property type="term" value="C:centriole"/>
    <property type="evidence" value="ECO:0000314"/>
    <property type="project" value="UniProtKB"/>
</dbReference>
<dbReference type="GO" id="GO:0005737">
    <property type="term" value="C:cytoplasm"/>
    <property type="evidence" value="ECO:0000314"/>
    <property type="project" value="UniProtKB"/>
</dbReference>
<dbReference type="GO" id="GO:0005524">
    <property type="term" value="F:ATP binding"/>
    <property type="evidence" value="ECO:0000250"/>
    <property type="project" value="UniProtKB"/>
</dbReference>
<dbReference type="GO" id="GO:0000287">
    <property type="term" value="F:magnesium ion binding"/>
    <property type="evidence" value="ECO:0000314"/>
    <property type="project" value="UniProtKB"/>
</dbReference>
<dbReference type="GO" id="GO:0106310">
    <property type="term" value="F:protein serine kinase activity"/>
    <property type="evidence" value="ECO:0007669"/>
    <property type="project" value="RHEA"/>
</dbReference>
<dbReference type="GO" id="GO:0004674">
    <property type="term" value="F:protein serine/threonine kinase activity"/>
    <property type="evidence" value="ECO:0000314"/>
    <property type="project" value="UniProtKB"/>
</dbReference>
<dbReference type="GO" id="GO:0044877">
    <property type="term" value="F:protein-containing complex binding"/>
    <property type="evidence" value="ECO:0000353"/>
    <property type="project" value="UniProtKB"/>
</dbReference>
<dbReference type="GO" id="GO:0018105">
    <property type="term" value="P:peptidyl-serine phosphorylation"/>
    <property type="evidence" value="ECO:0000314"/>
    <property type="project" value="UniProtKB"/>
</dbReference>
<dbReference type="GO" id="GO:0046777">
    <property type="term" value="P:protein autophosphorylation"/>
    <property type="evidence" value="ECO:0000250"/>
    <property type="project" value="UniProtKB"/>
</dbReference>
<dbReference type="GO" id="GO:0006468">
    <property type="term" value="P:protein phosphorylation"/>
    <property type="evidence" value="ECO:0000250"/>
    <property type="project" value="UniProtKB"/>
</dbReference>
<dbReference type="GO" id="GO:0007286">
    <property type="term" value="P:spermatid development"/>
    <property type="evidence" value="ECO:0000315"/>
    <property type="project" value="UniProtKB"/>
</dbReference>
<dbReference type="CDD" id="cd14165">
    <property type="entry name" value="STKc_TSSK1_2-like"/>
    <property type="match status" value="1"/>
</dbReference>
<dbReference type="FunFam" id="1.10.510.10:FF:000443">
    <property type="entry name" value="Testis-specific serine/threonine-protein kinase 2"/>
    <property type="match status" value="1"/>
</dbReference>
<dbReference type="Gene3D" id="1.10.510.10">
    <property type="entry name" value="Transferase(Phosphotransferase) domain 1"/>
    <property type="match status" value="1"/>
</dbReference>
<dbReference type="InterPro" id="IPR011009">
    <property type="entry name" value="Kinase-like_dom_sf"/>
</dbReference>
<dbReference type="InterPro" id="IPR000719">
    <property type="entry name" value="Prot_kinase_dom"/>
</dbReference>
<dbReference type="InterPro" id="IPR017441">
    <property type="entry name" value="Protein_kinase_ATP_BS"/>
</dbReference>
<dbReference type="InterPro" id="IPR008271">
    <property type="entry name" value="Ser/Thr_kinase_AS"/>
</dbReference>
<dbReference type="PANTHER" id="PTHR24346">
    <property type="entry name" value="MAP/MICROTUBULE AFFINITY-REGULATING KINASE"/>
    <property type="match status" value="1"/>
</dbReference>
<dbReference type="PANTHER" id="PTHR24346:SF102">
    <property type="entry name" value="TESTIS-SPECIFIC SERINE_THREONINE-PROTEIN KINASE 1"/>
    <property type="match status" value="1"/>
</dbReference>
<dbReference type="Pfam" id="PF00069">
    <property type="entry name" value="Pkinase"/>
    <property type="match status" value="1"/>
</dbReference>
<dbReference type="SMART" id="SM00220">
    <property type="entry name" value="S_TKc"/>
    <property type="match status" value="1"/>
</dbReference>
<dbReference type="SUPFAM" id="SSF56112">
    <property type="entry name" value="Protein kinase-like (PK-like)"/>
    <property type="match status" value="1"/>
</dbReference>
<dbReference type="PROSITE" id="PS00107">
    <property type="entry name" value="PROTEIN_KINASE_ATP"/>
    <property type="match status" value="1"/>
</dbReference>
<dbReference type="PROSITE" id="PS50011">
    <property type="entry name" value="PROTEIN_KINASE_DOM"/>
    <property type="match status" value="1"/>
</dbReference>
<dbReference type="PROSITE" id="PS00108">
    <property type="entry name" value="PROTEIN_KINASE_ST"/>
    <property type="match status" value="1"/>
</dbReference>
<gene>
    <name type="primary">Tssk2</name>
    <name type="synonym">Stk22b</name>
</gene>
<organism>
    <name type="scientific">Mus musculus</name>
    <name type="common">Mouse</name>
    <dbReference type="NCBI Taxonomy" id="10090"/>
    <lineage>
        <taxon>Eukaryota</taxon>
        <taxon>Metazoa</taxon>
        <taxon>Chordata</taxon>
        <taxon>Craniata</taxon>
        <taxon>Vertebrata</taxon>
        <taxon>Euteleostomi</taxon>
        <taxon>Mammalia</taxon>
        <taxon>Eutheria</taxon>
        <taxon>Euarchontoglires</taxon>
        <taxon>Glires</taxon>
        <taxon>Rodentia</taxon>
        <taxon>Myomorpha</taxon>
        <taxon>Muroidea</taxon>
        <taxon>Muridae</taxon>
        <taxon>Murinae</taxon>
        <taxon>Mus</taxon>
        <taxon>Mus</taxon>
    </lineage>
</organism>
<name>TSSK2_MOUSE</name>
<proteinExistence type="evidence at protein level"/>
<accession>O54863</accession>
<accession>Q6P8M9</accession>
<evidence type="ECO:0000250" key="1"/>
<evidence type="ECO:0000250" key="2">
    <source>
        <dbReference type="UniProtKB" id="Q96PF2"/>
    </source>
</evidence>
<evidence type="ECO:0000255" key="3">
    <source>
        <dbReference type="PROSITE-ProRule" id="PRU00159"/>
    </source>
</evidence>
<evidence type="ECO:0000255" key="4">
    <source>
        <dbReference type="PROSITE-ProRule" id="PRU10027"/>
    </source>
</evidence>
<evidence type="ECO:0000256" key="5">
    <source>
        <dbReference type="SAM" id="MobiDB-lite"/>
    </source>
</evidence>
<evidence type="ECO:0000269" key="6">
    <source>
    </source>
</evidence>
<evidence type="ECO:0000269" key="7">
    <source>
    </source>
</evidence>
<evidence type="ECO:0000269" key="8">
    <source>
    </source>
</evidence>
<evidence type="ECO:0000269" key="9">
    <source>
    </source>
</evidence>
<evidence type="ECO:0000269" key="10">
    <source>
    </source>
</evidence>
<evidence type="ECO:0000269" key="11">
    <source>
    </source>
</evidence>
<evidence type="ECO:0000269" key="12">
    <source>
    </source>
</evidence>
<evidence type="ECO:0000269" key="13">
    <source>
    </source>
</evidence>
<evidence type="ECO:0000305" key="14"/>
<evidence type="ECO:0000305" key="15">
    <source>
    </source>
</evidence>